<accession>P67608</accession>
<accession>A0A1R3Y573</accession>
<accession>O06284</accession>
<accession>X2BNU4</accession>
<proteinExistence type="inferred from homology"/>
<protein>
    <recommendedName>
        <fullName>Lysine--tRNA ligase 1</fullName>
        <ecNumber>6.1.1.6</ecNumber>
    </recommendedName>
    <alternativeName>
        <fullName>Lysyl-tRNA synthetase 1</fullName>
        <shortName>LysRS 1</shortName>
    </alternativeName>
</protein>
<keyword id="KW-0030">Aminoacyl-tRNA synthetase</keyword>
<keyword id="KW-0067">ATP-binding</keyword>
<keyword id="KW-0963">Cytoplasm</keyword>
<keyword id="KW-0436">Ligase</keyword>
<keyword id="KW-0460">Magnesium</keyword>
<keyword id="KW-0479">Metal-binding</keyword>
<keyword id="KW-0547">Nucleotide-binding</keyword>
<keyword id="KW-0648">Protein biosynthesis</keyword>
<keyword id="KW-1185">Reference proteome</keyword>
<sequence length="505" mass="55709">MSAADTAEDLPEQFRIRRDKRARLLAQGRDPYPVAVPRTHTLAEVRAAHPDLPIDTATEDIVGVAGRVIFARNSGKLCFATLQDGDGTQLQVMISLDKVGQAALDAWKADVDLGDIVYVHGAVISSRRGELSVLADCWRIAAKSLRPLPVAHKEMSEESRVRQRYVDLIVRPEARAVARLRIAVVRAIRTALQRRGFLEVETPVLQTLAGGAAARPFATHSNALDIDLYLRIAPELFLKRCIVGGFDKVFELNRVFRNEGADSTHSPEFSMLETYQTYGTYDDSAVVTRELIQEVADEAIGTRQLPLPDGSVYDIDGEWATIQMYPSLSVALGEEITPQTTVDRLRGIADSLGLEKDPAIHDNRGFGHGKLIEELWERTVGKSLSAPTFVKDFPVQTTPLTRQHRSIPGVTEKWDLYLRGIELATGYSELSDPVVQRERFADQARAAAAGDDEAMVLDEDFLAALEYGMPPCTGTGMGIDRLLMSLTGLSIRETVLFPIVRPHSN</sequence>
<organism>
    <name type="scientific">Mycobacterium bovis (strain ATCC BAA-935 / AF2122/97)</name>
    <dbReference type="NCBI Taxonomy" id="233413"/>
    <lineage>
        <taxon>Bacteria</taxon>
        <taxon>Bacillati</taxon>
        <taxon>Actinomycetota</taxon>
        <taxon>Actinomycetes</taxon>
        <taxon>Mycobacteriales</taxon>
        <taxon>Mycobacteriaceae</taxon>
        <taxon>Mycobacterium</taxon>
        <taxon>Mycobacterium tuberculosis complex</taxon>
    </lineage>
</organism>
<evidence type="ECO:0000250" key="1"/>
<evidence type="ECO:0000305" key="2"/>
<reference key="1">
    <citation type="journal article" date="2003" name="Proc. Natl. Acad. Sci. U.S.A.">
        <title>The complete genome sequence of Mycobacterium bovis.</title>
        <authorList>
            <person name="Garnier T."/>
            <person name="Eiglmeier K."/>
            <person name="Camus J.-C."/>
            <person name="Medina N."/>
            <person name="Mansoor H."/>
            <person name="Pryor M."/>
            <person name="Duthoy S."/>
            <person name="Grondin S."/>
            <person name="Lacroix C."/>
            <person name="Monsempe C."/>
            <person name="Simon S."/>
            <person name="Harris B."/>
            <person name="Atkin R."/>
            <person name="Doggett J."/>
            <person name="Mayes R."/>
            <person name="Keating L."/>
            <person name="Wheeler P.R."/>
            <person name="Parkhill J."/>
            <person name="Barrell B.G."/>
            <person name="Cole S.T."/>
            <person name="Gordon S.V."/>
            <person name="Hewinson R.G."/>
        </authorList>
    </citation>
    <scope>NUCLEOTIDE SEQUENCE [LARGE SCALE GENOMIC DNA]</scope>
    <source>
        <strain>ATCC BAA-935 / AF2122/97</strain>
    </source>
</reference>
<reference key="2">
    <citation type="journal article" date="2017" name="Genome Announc.">
        <title>Updated reference genome sequence and annotation of Mycobacterium bovis AF2122/97.</title>
        <authorList>
            <person name="Malone K.M."/>
            <person name="Farrell D."/>
            <person name="Stuber T.P."/>
            <person name="Schubert O.T."/>
            <person name="Aebersold R."/>
            <person name="Robbe-Austerman S."/>
            <person name="Gordon S.V."/>
        </authorList>
    </citation>
    <scope>NUCLEOTIDE SEQUENCE [LARGE SCALE GENOMIC DNA]</scope>
    <scope>GENOME REANNOTATION</scope>
    <source>
        <strain>ATCC BAA-935 / AF2122/97</strain>
    </source>
</reference>
<name>SYK1_MYCBO</name>
<comment type="catalytic activity">
    <reaction>
        <text>tRNA(Lys) + L-lysine + ATP = L-lysyl-tRNA(Lys) + AMP + diphosphate</text>
        <dbReference type="Rhea" id="RHEA:20792"/>
        <dbReference type="Rhea" id="RHEA-COMP:9696"/>
        <dbReference type="Rhea" id="RHEA-COMP:9697"/>
        <dbReference type="ChEBI" id="CHEBI:30616"/>
        <dbReference type="ChEBI" id="CHEBI:32551"/>
        <dbReference type="ChEBI" id="CHEBI:33019"/>
        <dbReference type="ChEBI" id="CHEBI:78442"/>
        <dbReference type="ChEBI" id="CHEBI:78529"/>
        <dbReference type="ChEBI" id="CHEBI:456215"/>
        <dbReference type="EC" id="6.1.1.6"/>
    </reaction>
</comment>
<comment type="cofactor">
    <cofactor evidence="1">
        <name>Mg(2+)</name>
        <dbReference type="ChEBI" id="CHEBI:18420"/>
    </cofactor>
    <text evidence="1">Binds 3 Mg(2+) ions per subunit.</text>
</comment>
<comment type="subunit">
    <text evidence="1">Homodimer.</text>
</comment>
<comment type="subcellular location">
    <subcellularLocation>
        <location evidence="1">Cytoplasm</location>
    </subcellularLocation>
</comment>
<comment type="miscellaneous">
    <text>There are two lysyl-tRNA ligases in M.bovis.</text>
</comment>
<comment type="similarity">
    <text evidence="2">Belongs to the class-II aminoacyl-tRNA synthetase family.</text>
</comment>
<gene>
    <name type="primary">lysS1</name>
    <name type="synonym">lysS</name>
    <name type="ordered locus">BQ2027_MB3629C</name>
</gene>
<dbReference type="EC" id="6.1.1.6"/>
<dbReference type="EMBL" id="LT708304">
    <property type="protein sequence ID" value="SIU02256.1"/>
    <property type="molecule type" value="Genomic_DNA"/>
</dbReference>
<dbReference type="RefSeq" id="NP_857268.1">
    <property type="nucleotide sequence ID" value="NC_002945.3"/>
</dbReference>
<dbReference type="RefSeq" id="WP_003419514.1">
    <property type="nucleotide sequence ID" value="NC_002945.4"/>
</dbReference>
<dbReference type="SMR" id="P67608"/>
<dbReference type="KEGG" id="mbo:BQ2027_MB3629C"/>
<dbReference type="PATRIC" id="fig|233413.5.peg.3975"/>
<dbReference type="Proteomes" id="UP000001419">
    <property type="component" value="Chromosome"/>
</dbReference>
<dbReference type="GO" id="GO:0005829">
    <property type="term" value="C:cytosol"/>
    <property type="evidence" value="ECO:0007669"/>
    <property type="project" value="TreeGrafter"/>
</dbReference>
<dbReference type="GO" id="GO:0005524">
    <property type="term" value="F:ATP binding"/>
    <property type="evidence" value="ECO:0007669"/>
    <property type="project" value="UniProtKB-UniRule"/>
</dbReference>
<dbReference type="GO" id="GO:0004824">
    <property type="term" value="F:lysine-tRNA ligase activity"/>
    <property type="evidence" value="ECO:0007669"/>
    <property type="project" value="UniProtKB-UniRule"/>
</dbReference>
<dbReference type="GO" id="GO:0000287">
    <property type="term" value="F:magnesium ion binding"/>
    <property type="evidence" value="ECO:0007669"/>
    <property type="project" value="UniProtKB-UniRule"/>
</dbReference>
<dbReference type="GO" id="GO:0000049">
    <property type="term" value="F:tRNA binding"/>
    <property type="evidence" value="ECO:0007669"/>
    <property type="project" value="TreeGrafter"/>
</dbReference>
<dbReference type="GO" id="GO:0006430">
    <property type="term" value="P:lysyl-tRNA aminoacylation"/>
    <property type="evidence" value="ECO:0007669"/>
    <property type="project" value="UniProtKB-UniRule"/>
</dbReference>
<dbReference type="CDD" id="cd04322">
    <property type="entry name" value="LysRS_N"/>
    <property type="match status" value="1"/>
</dbReference>
<dbReference type="FunFam" id="2.40.50.140:FF:000024">
    <property type="entry name" value="Lysine--tRNA ligase"/>
    <property type="match status" value="1"/>
</dbReference>
<dbReference type="FunFam" id="3.30.930.10:FF:000079">
    <property type="entry name" value="Lysine--tRNA ligase 1"/>
    <property type="match status" value="1"/>
</dbReference>
<dbReference type="Gene3D" id="3.30.930.10">
    <property type="entry name" value="Bira Bifunctional Protein, Domain 2"/>
    <property type="match status" value="1"/>
</dbReference>
<dbReference type="Gene3D" id="2.40.50.140">
    <property type="entry name" value="Nucleic acid-binding proteins"/>
    <property type="match status" value="1"/>
</dbReference>
<dbReference type="HAMAP" id="MF_00252">
    <property type="entry name" value="Lys_tRNA_synth_class2"/>
    <property type="match status" value="1"/>
</dbReference>
<dbReference type="InterPro" id="IPR004364">
    <property type="entry name" value="Aa-tRNA-synt_II"/>
</dbReference>
<dbReference type="InterPro" id="IPR006195">
    <property type="entry name" value="aa-tRNA-synth_II"/>
</dbReference>
<dbReference type="InterPro" id="IPR045864">
    <property type="entry name" value="aa-tRNA-synth_II/BPL/LPL"/>
</dbReference>
<dbReference type="InterPro" id="IPR002313">
    <property type="entry name" value="Lys-tRNA-ligase_II"/>
</dbReference>
<dbReference type="InterPro" id="IPR044136">
    <property type="entry name" value="Lys-tRNA-ligase_II_N"/>
</dbReference>
<dbReference type="InterPro" id="IPR018149">
    <property type="entry name" value="Lys-tRNA-synth_II_C"/>
</dbReference>
<dbReference type="InterPro" id="IPR012340">
    <property type="entry name" value="NA-bd_OB-fold"/>
</dbReference>
<dbReference type="InterPro" id="IPR004365">
    <property type="entry name" value="NA-bd_OB_tRNA"/>
</dbReference>
<dbReference type="NCBIfam" id="TIGR00499">
    <property type="entry name" value="lysS_bact"/>
    <property type="match status" value="1"/>
</dbReference>
<dbReference type="NCBIfam" id="NF001756">
    <property type="entry name" value="PRK00484.1"/>
    <property type="match status" value="1"/>
</dbReference>
<dbReference type="PANTHER" id="PTHR42918:SF15">
    <property type="entry name" value="LYSINE--TRNA LIGASE, CHLOROPLASTIC_MITOCHONDRIAL"/>
    <property type="match status" value="1"/>
</dbReference>
<dbReference type="PANTHER" id="PTHR42918">
    <property type="entry name" value="LYSYL-TRNA SYNTHETASE"/>
    <property type="match status" value="1"/>
</dbReference>
<dbReference type="Pfam" id="PF00152">
    <property type="entry name" value="tRNA-synt_2"/>
    <property type="match status" value="1"/>
</dbReference>
<dbReference type="Pfam" id="PF01336">
    <property type="entry name" value="tRNA_anti-codon"/>
    <property type="match status" value="1"/>
</dbReference>
<dbReference type="PRINTS" id="PR00982">
    <property type="entry name" value="TRNASYNTHLYS"/>
</dbReference>
<dbReference type="SUPFAM" id="SSF55681">
    <property type="entry name" value="Class II aaRS and biotin synthetases"/>
    <property type="match status" value="1"/>
</dbReference>
<dbReference type="SUPFAM" id="SSF50249">
    <property type="entry name" value="Nucleic acid-binding proteins"/>
    <property type="match status" value="1"/>
</dbReference>
<dbReference type="PROSITE" id="PS50862">
    <property type="entry name" value="AA_TRNA_LIGASE_II"/>
    <property type="match status" value="1"/>
</dbReference>
<feature type="chain" id="PRO_0000152654" description="Lysine--tRNA ligase 1">
    <location>
        <begin position="1"/>
        <end position="505"/>
    </location>
</feature>
<feature type="binding site" evidence="1">
    <location>
        <position position="415"/>
    </location>
    <ligand>
        <name>Mg(2+)</name>
        <dbReference type="ChEBI" id="CHEBI:18420"/>
        <label>1</label>
    </ligand>
</feature>
<feature type="binding site" evidence="1">
    <location>
        <position position="422"/>
    </location>
    <ligand>
        <name>Mg(2+)</name>
        <dbReference type="ChEBI" id="CHEBI:18420"/>
        <label>1</label>
    </ligand>
</feature>
<feature type="binding site" evidence="1">
    <location>
        <position position="422"/>
    </location>
    <ligand>
        <name>Mg(2+)</name>
        <dbReference type="ChEBI" id="CHEBI:18420"/>
        <label>2</label>
    </ligand>
</feature>